<gene>
    <name evidence="1" type="primary">fixA</name>
    <name type="ordered locus">EcHS_A0047</name>
</gene>
<protein>
    <recommendedName>
        <fullName evidence="1">Protein FixA</fullName>
    </recommendedName>
</protein>
<organism>
    <name type="scientific">Escherichia coli O9:H4 (strain HS)</name>
    <dbReference type="NCBI Taxonomy" id="331112"/>
    <lineage>
        <taxon>Bacteria</taxon>
        <taxon>Pseudomonadati</taxon>
        <taxon>Pseudomonadota</taxon>
        <taxon>Gammaproteobacteria</taxon>
        <taxon>Enterobacterales</taxon>
        <taxon>Enterobacteriaceae</taxon>
        <taxon>Escherichia</taxon>
    </lineage>
</organism>
<sequence length="256" mass="27144">MKIITCYKCVPDEQDIAVNNADGSLDFSKADAKISQYDLNAIEAACQLKQQAAEAQVTALSVGGKALTNAKGRKDVLSRGPDELIVVIDDQFEQALPQQTASALAAAAQKAGFDLILCGDGSSDLYAQQVGLLVGEILNIPAVNGVSKIISLTADTLTVERELEDETETLSIPLPAVVAVSTDINSPQIPSMKAILGAAKKPVQVWSAADIGFNAEAAWSEQQVAAPKQRERQRIVIEGDGEEQIAAFAENLRKVI</sequence>
<name>FIXA_ECOHS</name>
<accession>A7ZVZ3</accession>
<reference key="1">
    <citation type="journal article" date="2008" name="J. Bacteriol.">
        <title>The pangenome structure of Escherichia coli: comparative genomic analysis of E. coli commensal and pathogenic isolates.</title>
        <authorList>
            <person name="Rasko D.A."/>
            <person name="Rosovitz M.J."/>
            <person name="Myers G.S.A."/>
            <person name="Mongodin E.F."/>
            <person name="Fricke W.F."/>
            <person name="Gajer P."/>
            <person name="Crabtree J."/>
            <person name="Sebaihia M."/>
            <person name="Thomson N.R."/>
            <person name="Chaudhuri R."/>
            <person name="Henderson I.R."/>
            <person name="Sperandio V."/>
            <person name="Ravel J."/>
        </authorList>
    </citation>
    <scope>NUCLEOTIDE SEQUENCE [LARGE SCALE GENOMIC DNA]</scope>
    <source>
        <strain>HS</strain>
    </source>
</reference>
<keyword id="KW-0249">Electron transport</keyword>
<keyword id="KW-0813">Transport</keyword>
<dbReference type="EMBL" id="CP000802">
    <property type="protein sequence ID" value="ABV04447.1"/>
    <property type="molecule type" value="Genomic_DNA"/>
</dbReference>
<dbReference type="RefSeq" id="WP_000692204.1">
    <property type="nucleotide sequence ID" value="NC_009800.1"/>
</dbReference>
<dbReference type="SMR" id="A7ZVZ3"/>
<dbReference type="KEGG" id="ecx:EcHS_A0047"/>
<dbReference type="HOGENOM" id="CLU_060196_2_2_6"/>
<dbReference type="UniPathway" id="UPA00117"/>
<dbReference type="GO" id="GO:0009055">
    <property type="term" value="F:electron transfer activity"/>
    <property type="evidence" value="ECO:0007669"/>
    <property type="project" value="InterPro"/>
</dbReference>
<dbReference type="GO" id="GO:0009437">
    <property type="term" value="P:carnitine metabolic process"/>
    <property type="evidence" value="ECO:0007669"/>
    <property type="project" value="UniProtKB-UniRule"/>
</dbReference>
<dbReference type="CDD" id="cd01714">
    <property type="entry name" value="ETF_beta"/>
    <property type="match status" value="1"/>
</dbReference>
<dbReference type="FunFam" id="3.40.50.620:FF:000072">
    <property type="entry name" value="Protein FixA homolog"/>
    <property type="match status" value="1"/>
</dbReference>
<dbReference type="Gene3D" id="3.40.50.620">
    <property type="entry name" value="HUPs"/>
    <property type="match status" value="1"/>
</dbReference>
<dbReference type="HAMAP" id="MF_01055">
    <property type="entry name" value="FixA"/>
    <property type="match status" value="1"/>
</dbReference>
<dbReference type="InterPro" id="IPR000049">
    <property type="entry name" value="ET-Flavoprotein_bsu_CS"/>
</dbReference>
<dbReference type="InterPro" id="IPR014730">
    <property type="entry name" value="ETF_a/b_N"/>
</dbReference>
<dbReference type="InterPro" id="IPR012255">
    <property type="entry name" value="ETF_b"/>
</dbReference>
<dbReference type="InterPro" id="IPR033948">
    <property type="entry name" value="ETF_beta_N"/>
</dbReference>
<dbReference type="InterPro" id="IPR023463">
    <property type="entry name" value="FixA"/>
</dbReference>
<dbReference type="InterPro" id="IPR014729">
    <property type="entry name" value="Rossmann-like_a/b/a_fold"/>
</dbReference>
<dbReference type="NCBIfam" id="NF002888">
    <property type="entry name" value="PRK03359.1"/>
    <property type="match status" value="1"/>
</dbReference>
<dbReference type="PANTHER" id="PTHR21294">
    <property type="entry name" value="ELECTRON TRANSFER FLAVOPROTEIN BETA-SUBUNIT"/>
    <property type="match status" value="1"/>
</dbReference>
<dbReference type="PANTHER" id="PTHR21294:SF17">
    <property type="entry name" value="PROTEIN FIXA"/>
    <property type="match status" value="1"/>
</dbReference>
<dbReference type="Pfam" id="PF01012">
    <property type="entry name" value="ETF"/>
    <property type="match status" value="1"/>
</dbReference>
<dbReference type="PIRSF" id="PIRSF000090">
    <property type="entry name" value="Beta-ETF"/>
    <property type="match status" value="1"/>
</dbReference>
<dbReference type="SMART" id="SM00893">
    <property type="entry name" value="ETF"/>
    <property type="match status" value="1"/>
</dbReference>
<dbReference type="SUPFAM" id="SSF52402">
    <property type="entry name" value="Adenine nucleotide alpha hydrolases-like"/>
    <property type="match status" value="1"/>
</dbReference>
<dbReference type="PROSITE" id="PS01065">
    <property type="entry name" value="ETF_BETA"/>
    <property type="match status" value="1"/>
</dbReference>
<comment type="function">
    <text evidence="1">Required for anaerobic carnitine reduction. May bring reductant to CaiA.</text>
</comment>
<comment type="pathway">
    <text evidence="1">Amine and polyamine metabolism; carnitine metabolism.</text>
</comment>
<comment type="subunit">
    <text evidence="1">Heterodimer of FixA and FixB.</text>
</comment>
<comment type="similarity">
    <text evidence="1">Belongs to the ETF beta-subunit/FixA family.</text>
</comment>
<feature type="chain" id="PRO_1000064381" description="Protein FixA">
    <location>
        <begin position="1"/>
        <end position="256"/>
    </location>
</feature>
<proteinExistence type="inferred from homology"/>
<evidence type="ECO:0000255" key="1">
    <source>
        <dbReference type="HAMAP-Rule" id="MF_01055"/>
    </source>
</evidence>